<proteinExistence type="evidence at transcript level"/>
<gene>
    <name type="primary">RPL6</name>
</gene>
<protein>
    <recommendedName>
        <fullName evidence="1">Large ribosomal subunit protein eL6</fullName>
    </recommendedName>
    <alternativeName>
        <fullName>60S ribosomal protein L6</fullName>
    </alternativeName>
    <alternativeName>
        <fullName>YL16-like</fullName>
    </alternativeName>
</protein>
<comment type="similarity">
    <text evidence="1">Belongs to the eukaryotic ribosomal protein eL6 family.</text>
</comment>
<reference key="1">
    <citation type="submission" date="1992-11" db="EMBL/GenBank/DDBJ databases">
        <authorList>
            <person name="Quigley F.R."/>
            <person name="Michalowski C.B."/>
            <person name="Bohnert H.J."/>
            <person name="Mache R."/>
        </authorList>
    </citation>
    <scope>NUCLEOTIDE SEQUENCE [MRNA]</scope>
</reference>
<accession>P34091</accession>
<feature type="chain" id="PRO_0000171015" description="Large ribosomal subunit protein eL6">
    <location>
        <begin position="1"/>
        <end position="234"/>
    </location>
</feature>
<name>RL6_MESCR</name>
<dbReference type="EMBL" id="X69378">
    <property type="protein sequence ID" value="CAA49175.1"/>
    <property type="molecule type" value="mRNA"/>
</dbReference>
<dbReference type="PIR" id="S28586">
    <property type="entry name" value="S28586"/>
</dbReference>
<dbReference type="SMR" id="P34091"/>
<dbReference type="GO" id="GO:0022625">
    <property type="term" value="C:cytosolic large ribosomal subunit"/>
    <property type="evidence" value="ECO:0007669"/>
    <property type="project" value="TreeGrafter"/>
</dbReference>
<dbReference type="GO" id="GO:0003723">
    <property type="term" value="F:RNA binding"/>
    <property type="evidence" value="ECO:0007669"/>
    <property type="project" value="TreeGrafter"/>
</dbReference>
<dbReference type="GO" id="GO:0003735">
    <property type="term" value="F:structural constituent of ribosome"/>
    <property type="evidence" value="ECO:0007669"/>
    <property type="project" value="InterPro"/>
</dbReference>
<dbReference type="GO" id="GO:0002181">
    <property type="term" value="P:cytoplasmic translation"/>
    <property type="evidence" value="ECO:0007669"/>
    <property type="project" value="TreeGrafter"/>
</dbReference>
<dbReference type="GO" id="GO:0000027">
    <property type="term" value="P:ribosomal large subunit assembly"/>
    <property type="evidence" value="ECO:0007669"/>
    <property type="project" value="TreeGrafter"/>
</dbReference>
<dbReference type="CDD" id="cd13156">
    <property type="entry name" value="KOW_RPL6"/>
    <property type="match status" value="1"/>
</dbReference>
<dbReference type="FunFam" id="2.30.30.30:FF:000014">
    <property type="entry name" value="60S ribosomal protein L6"/>
    <property type="match status" value="1"/>
</dbReference>
<dbReference type="Gene3D" id="2.30.30.30">
    <property type="match status" value="1"/>
</dbReference>
<dbReference type="InterPro" id="IPR000915">
    <property type="entry name" value="60S_ribosomal_eL6"/>
</dbReference>
<dbReference type="InterPro" id="IPR014722">
    <property type="entry name" value="Rib_uL2_dom2"/>
</dbReference>
<dbReference type="InterPro" id="IPR049633">
    <property type="entry name" value="Ribosomal_eL6_CS"/>
</dbReference>
<dbReference type="InterPro" id="IPR041997">
    <property type="entry name" value="Ribosomal_eL6_KOW"/>
</dbReference>
<dbReference type="InterPro" id="IPR005568">
    <property type="entry name" value="Ribosomal_uL6_N"/>
</dbReference>
<dbReference type="InterPro" id="IPR008991">
    <property type="entry name" value="Translation_prot_SH3-like_sf"/>
</dbReference>
<dbReference type="PANTHER" id="PTHR10715">
    <property type="entry name" value="60S RIBOSOMAL PROTEIN L6"/>
    <property type="match status" value="1"/>
</dbReference>
<dbReference type="PANTHER" id="PTHR10715:SF0">
    <property type="entry name" value="LARGE RIBOSOMAL SUBUNIT PROTEIN EL6"/>
    <property type="match status" value="1"/>
</dbReference>
<dbReference type="Pfam" id="PF01159">
    <property type="entry name" value="Ribosomal_L6e"/>
    <property type="match status" value="1"/>
</dbReference>
<dbReference type="Pfam" id="PF03868">
    <property type="entry name" value="Ribosomal_L6e_N"/>
    <property type="match status" value="1"/>
</dbReference>
<dbReference type="SUPFAM" id="SSF50104">
    <property type="entry name" value="Translation proteins SH3-like domain"/>
    <property type="match status" value="1"/>
</dbReference>
<dbReference type="PROSITE" id="PS01170">
    <property type="entry name" value="RIBOSOMAL_L6E"/>
    <property type="match status" value="1"/>
</dbReference>
<keyword id="KW-0687">Ribonucleoprotein</keyword>
<keyword id="KW-0689">Ribosomal protein</keyword>
<organism>
    <name type="scientific">Mesembryanthemum crystallinum</name>
    <name type="common">Common ice plant</name>
    <name type="synonym">Cryophytum crystallinum</name>
    <dbReference type="NCBI Taxonomy" id="3544"/>
    <lineage>
        <taxon>Eukaryota</taxon>
        <taxon>Viridiplantae</taxon>
        <taxon>Streptophyta</taxon>
        <taxon>Embryophyta</taxon>
        <taxon>Tracheophyta</taxon>
        <taxon>Spermatophyta</taxon>
        <taxon>Magnoliopsida</taxon>
        <taxon>eudicotyledons</taxon>
        <taxon>Gunneridae</taxon>
        <taxon>Pentapetalae</taxon>
        <taxon>Caryophyllales</taxon>
        <taxon>Aizoaceae</taxon>
        <taxon>Mesembryanthemum</taxon>
        <taxon>Mesembryanthemum subgen. Cryophytum</taxon>
    </lineage>
</organism>
<evidence type="ECO:0000305" key="1"/>
<sequence>MAAAKQRKPHVSRNPELVRGIGKYSRSKMYHKRGLWAIKAKNGGVFPKHAPKSADSKAVEKPPKFYPADDVKKPLINKRKPKPTKLRASITPGTVLIILAGRFKGKRVVFLKQLSSGLLLVTGPFKVNGVPLRRVNQAYVIATSTKVDISGVNVEKFDDKYFGKKAEKKNKKGEGEFFEAEKKEVNVLPQEKKDDQKAVDVALLKAIEGVPELKAYLGARFSLKAGMKPHELVF</sequence>